<protein>
    <recommendedName>
        <fullName evidence="1">Polyribonucleotide nucleotidyltransferase</fullName>
        <ecNumber evidence="1">2.7.7.8</ecNumber>
    </recommendedName>
    <alternativeName>
        <fullName evidence="1">Polynucleotide phosphorylase</fullName>
        <shortName evidence="1">PNPase</shortName>
    </alternativeName>
</protein>
<sequence>MFEATATIDNGSFGTRTIRFETGRLAQQAAGAVVAYLDDENMLLSATTASKSPKEHFDFFPLTVDVEERMYAAGRIPGSFFRREGRPSTDAILTCRLIDRPLRPSFVDGLRNEIQVVVTILSLDPNDLYDVLAINAASASTQLGGLPFSGPIGGVRVALIDGTWVAFPTVEQLERAVFDMVVAGRKVDGADGPDVAIMMVEAEATSNVIELIDGGAQAPTETVVAQGLEAAKPFIEVLCTAQQELADKAARPTSDYPTFPDYGDDVYYSVASVATDELSKALTIGGKAERDARTDELKAEVLARLAETYEGREKEVSAAFRSLTKKLVRQRILTDHFRIDGRGITDIRALSAEVAVVPRAHGSALFQRGETQILGVTTLDMVKMAQQIDSLGPETTKRYMHHYNFPPFSTGETGRVGSPKRREIGHGALAERALVPVLPSLEDFPYAIRQVSEALGSNGSTSMGSVCASTLALLNAGVPLKAPVAGIAMGLVSDDIEVEAGDGTKSLERRFVTLTDILGAEDAFGDMDFKVAGTKDFVTALQLDTKLDGIPSQVLAGALSQAKDARLTILEVMAEAIDEPDEMSPYAPRVTTIRVPVDKIGEVIGPKGKIINAITEETGAQISIEDDGTVFVGATDGPSAQAAIDRINAIANPQLPTVGERFLGTVVKTTDFGAFVSLLPGRDGLVHISKLGKGKRIAKVEDVVNVGDKLRVEIADIDKRGKISLVLVEEDNSAPADAPAAAPADATS</sequence>
<accession>A0QIW5</accession>
<feature type="chain" id="PRO_0000329715" description="Polyribonucleotide nucleotidyltransferase">
    <location>
        <begin position="1"/>
        <end position="748"/>
    </location>
</feature>
<feature type="domain" description="KH" evidence="1">
    <location>
        <begin position="588"/>
        <end position="647"/>
    </location>
</feature>
<feature type="domain" description="S1 motif" evidence="1">
    <location>
        <begin position="659"/>
        <end position="728"/>
    </location>
</feature>
<feature type="binding site" evidence="1">
    <location>
        <position position="522"/>
    </location>
    <ligand>
        <name>Mg(2+)</name>
        <dbReference type="ChEBI" id="CHEBI:18420"/>
    </ligand>
</feature>
<feature type="binding site" evidence="1">
    <location>
        <position position="528"/>
    </location>
    <ligand>
        <name>Mg(2+)</name>
        <dbReference type="ChEBI" id="CHEBI:18420"/>
    </ligand>
</feature>
<comment type="function">
    <text evidence="1">Involved in mRNA degradation. Catalyzes the phosphorolysis of single-stranded polyribonucleotides processively in the 3'- to 5'-direction.</text>
</comment>
<comment type="catalytic activity">
    <reaction evidence="1">
        <text>RNA(n+1) + phosphate = RNA(n) + a ribonucleoside 5'-diphosphate</text>
        <dbReference type="Rhea" id="RHEA:22096"/>
        <dbReference type="Rhea" id="RHEA-COMP:14527"/>
        <dbReference type="Rhea" id="RHEA-COMP:17342"/>
        <dbReference type="ChEBI" id="CHEBI:43474"/>
        <dbReference type="ChEBI" id="CHEBI:57930"/>
        <dbReference type="ChEBI" id="CHEBI:140395"/>
        <dbReference type="EC" id="2.7.7.8"/>
    </reaction>
</comment>
<comment type="cofactor">
    <cofactor evidence="1">
        <name>Mg(2+)</name>
        <dbReference type="ChEBI" id="CHEBI:18420"/>
    </cofactor>
</comment>
<comment type="subcellular location">
    <subcellularLocation>
        <location evidence="1">Cytoplasm</location>
    </subcellularLocation>
</comment>
<comment type="similarity">
    <text evidence="1">Belongs to the polyribonucleotide nucleotidyltransferase family.</text>
</comment>
<gene>
    <name evidence="1" type="primary">pnp</name>
    <name type="ordered locus">MAV_3676</name>
</gene>
<proteinExistence type="inferred from homology"/>
<organism>
    <name type="scientific">Mycobacterium avium (strain 104)</name>
    <dbReference type="NCBI Taxonomy" id="243243"/>
    <lineage>
        <taxon>Bacteria</taxon>
        <taxon>Bacillati</taxon>
        <taxon>Actinomycetota</taxon>
        <taxon>Actinomycetes</taxon>
        <taxon>Mycobacteriales</taxon>
        <taxon>Mycobacteriaceae</taxon>
        <taxon>Mycobacterium</taxon>
        <taxon>Mycobacterium avium complex (MAC)</taxon>
    </lineage>
</organism>
<name>PNP_MYCA1</name>
<dbReference type="EC" id="2.7.7.8" evidence="1"/>
<dbReference type="EMBL" id="CP000479">
    <property type="protein sequence ID" value="ABK69071.1"/>
    <property type="molecule type" value="Genomic_DNA"/>
</dbReference>
<dbReference type="SMR" id="A0QIW5"/>
<dbReference type="KEGG" id="mav:MAV_3676"/>
<dbReference type="HOGENOM" id="CLU_004217_2_2_11"/>
<dbReference type="Proteomes" id="UP000001574">
    <property type="component" value="Chromosome"/>
</dbReference>
<dbReference type="GO" id="GO:0005829">
    <property type="term" value="C:cytosol"/>
    <property type="evidence" value="ECO:0007669"/>
    <property type="project" value="TreeGrafter"/>
</dbReference>
<dbReference type="GO" id="GO:0000175">
    <property type="term" value="F:3'-5'-RNA exonuclease activity"/>
    <property type="evidence" value="ECO:0007669"/>
    <property type="project" value="TreeGrafter"/>
</dbReference>
<dbReference type="GO" id="GO:0000287">
    <property type="term" value="F:magnesium ion binding"/>
    <property type="evidence" value="ECO:0007669"/>
    <property type="project" value="UniProtKB-UniRule"/>
</dbReference>
<dbReference type="GO" id="GO:0004654">
    <property type="term" value="F:polyribonucleotide nucleotidyltransferase activity"/>
    <property type="evidence" value="ECO:0007669"/>
    <property type="project" value="UniProtKB-UniRule"/>
</dbReference>
<dbReference type="GO" id="GO:0003723">
    <property type="term" value="F:RNA binding"/>
    <property type="evidence" value="ECO:0007669"/>
    <property type="project" value="UniProtKB-UniRule"/>
</dbReference>
<dbReference type="GO" id="GO:0006402">
    <property type="term" value="P:mRNA catabolic process"/>
    <property type="evidence" value="ECO:0007669"/>
    <property type="project" value="UniProtKB-UniRule"/>
</dbReference>
<dbReference type="GO" id="GO:0006396">
    <property type="term" value="P:RNA processing"/>
    <property type="evidence" value="ECO:0007669"/>
    <property type="project" value="InterPro"/>
</dbReference>
<dbReference type="CDD" id="cd02393">
    <property type="entry name" value="KH-I_PNPase"/>
    <property type="match status" value="1"/>
</dbReference>
<dbReference type="CDD" id="cd11364">
    <property type="entry name" value="RNase_PH_PNPase_2"/>
    <property type="match status" value="1"/>
</dbReference>
<dbReference type="CDD" id="cd04472">
    <property type="entry name" value="S1_PNPase"/>
    <property type="match status" value="1"/>
</dbReference>
<dbReference type="FunFam" id="2.40.50.140:FF:000069">
    <property type="entry name" value="Polyribonucleotide nucleotidyltransferase"/>
    <property type="match status" value="1"/>
</dbReference>
<dbReference type="FunFam" id="3.30.1370.10:FF:000001">
    <property type="entry name" value="Polyribonucleotide nucleotidyltransferase"/>
    <property type="match status" value="1"/>
</dbReference>
<dbReference type="FunFam" id="3.30.230.70:FF:000001">
    <property type="entry name" value="Polyribonucleotide nucleotidyltransferase"/>
    <property type="match status" value="1"/>
</dbReference>
<dbReference type="FunFam" id="3.30.230.70:FF:000002">
    <property type="entry name" value="Polyribonucleotide nucleotidyltransferase"/>
    <property type="match status" value="1"/>
</dbReference>
<dbReference type="Gene3D" id="3.30.230.70">
    <property type="entry name" value="GHMP Kinase, N-terminal domain"/>
    <property type="match status" value="2"/>
</dbReference>
<dbReference type="Gene3D" id="3.30.1370.10">
    <property type="entry name" value="K Homology domain, type 1"/>
    <property type="match status" value="1"/>
</dbReference>
<dbReference type="Gene3D" id="2.40.50.140">
    <property type="entry name" value="Nucleic acid-binding proteins"/>
    <property type="match status" value="1"/>
</dbReference>
<dbReference type="HAMAP" id="MF_01595">
    <property type="entry name" value="PNPase"/>
    <property type="match status" value="1"/>
</dbReference>
<dbReference type="InterPro" id="IPR001247">
    <property type="entry name" value="ExoRNase_PH_dom1"/>
</dbReference>
<dbReference type="InterPro" id="IPR036345">
    <property type="entry name" value="ExoRNase_PH_dom2_sf"/>
</dbReference>
<dbReference type="InterPro" id="IPR014069">
    <property type="entry name" value="GPSI/PNP"/>
</dbReference>
<dbReference type="InterPro" id="IPR004087">
    <property type="entry name" value="KH_dom"/>
</dbReference>
<dbReference type="InterPro" id="IPR004088">
    <property type="entry name" value="KH_dom_type_1"/>
</dbReference>
<dbReference type="InterPro" id="IPR036612">
    <property type="entry name" value="KH_dom_type_1_sf"/>
</dbReference>
<dbReference type="InterPro" id="IPR012340">
    <property type="entry name" value="NA-bd_OB-fold"/>
</dbReference>
<dbReference type="InterPro" id="IPR012162">
    <property type="entry name" value="PNPase"/>
</dbReference>
<dbReference type="InterPro" id="IPR027408">
    <property type="entry name" value="PNPase/RNase_PH_dom_sf"/>
</dbReference>
<dbReference type="InterPro" id="IPR015848">
    <property type="entry name" value="PNPase_PH_RNA-bd_bac/org-type"/>
</dbReference>
<dbReference type="InterPro" id="IPR036456">
    <property type="entry name" value="PNPase_PH_RNA-bd_sf"/>
</dbReference>
<dbReference type="InterPro" id="IPR020568">
    <property type="entry name" value="Ribosomal_Su5_D2-typ_SF"/>
</dbReference>
<dbReference type="InterPro" id="IPR003029">
    <property type="entry name" value="S1_domain"/>
</dbReference>
<dbReference type="NCBIfam" id="TIGR03591">
    <property type="entry name" value="polynuc_phos"/>
    <property type="match status" value="1"/>
</dbReference>
<dbReference type="NCBIfam" id="TIGR02696">
    <property type="entry name" value="pppGpp_PNP"/>
    <property type="match status" value="1"/>
</dbReference>
<dbReference type="NCBIfam" id="NF008805">
    <property type="entry name" value="PRK11824.1"/>
    <property type="match status" value="1"/>
</dbReference>
<dbReference type="PANTHER" id="PTHR11252">
    <property type="entry name" value="POLYRIBONUCLEOTIDE NUCLEOTIDYLTRANSFERASE"/>
    <property type="match status" value="1"/>
</dbReference>
<dbReference type="PANTHER" id="PTHR11252:SF0">
    <property type="entry name" value="POLYRIBONUCLEOTIDE NUCLEOTIDYLTRANSFERASE 1, MITOCHONDRIAL"/>
    <property type="match status" value="1"/>
</dbReference>
<dbReference type="Pfam" id="PF00013">
    <property type="entry name" value="KH_1"/>
    <property type="match status" value="1"/>
</dbReference>
<dbReference type="Pfam" id="PF03726">
    <property type="entry name" value="PNPase"/>
    <property type="match status" value="1"/>
</dbReference>
<dbReference type="Pfam" id="PF01138">
    <property type="entry name" value="RNase_PH"/>
    <property type="match status" value="2"/>
</dbReference>
<dbReference type="Pfam" id="PF00575">
    <property type="entry name" value="S1"/>
    <property type="match status" value="1"/>
</dbReference>
<dbReference type="PIRSF" id="PIRSF005499">
    <property type="entry name" value="PNPase"/>
    <property type="match status" value="1"/>
</dbReference>
<dbReference type="SMART" id="SM00322">
    <property type="entry name" value="KH"/>
    <property type="match status" value="1"/>
</dbReference>
<dbReference type="SMART" id="SM00316">
    <property type="entry name" value="S1"/>
    <property type="match status" value="1"/>
</dbReference>
<dbReference type="SUPFAM" id="SSF54791">
    <property type="entry name" value="Eukaryotic type KH-domain (KH-domain type I)"/>
    <property type="match status" value="1"/>
</dbReference>
<dbReference type="SUPFAM" id="SSF50249">
    <property type="entry name" value="Nucleic acid-binding proteins"/>
    <property type="match status" value="1"/>
</dbReference>
<dbReference type="SUPFAM" id="SSF46915">
    <property type="entry name" value="Polynucleotide phosphorylase/guanosine pentaphosphate synthase (PNPase/GPSI), domain 3"/>
    <property type="match status" value="1"/>
</dbReference>
<dbReference type="SUPFAM" id="SSF55666">
    <property type="entry name" value="Ribonuclease PH domain 2-like"/>
    <property type="match status" value="2"/>
</dbReference>
<dbReference type="SUPFAM" id="SSF54211">
    <property type="entry name" value="Ribosomal protein S5 domain 2-like"/>
    <property type="match status" value="2"/>
</dbReference>
<dbReference type="PROSITE" id="PS50084">
    <property type="entry name" value="KH_TYPE_1"/>
    <property type="match status" value="1"/>
</dbReference>
<dbReference type="PROSITE" id="PS50126">
    <property type="entry name" value="S1"/>
    <property type="match status" value="1"/>
</dbReference>
<keyword id="KW-0963">Cytoplasm</keyword>
<keyword id="KW-0460">Magnesium</keyword>
<keyword id="KW-0479">Metal-binding</keyword>
<keyword id="KW-0548">Nucleotidyltransferase</keyword>
<keyword id="KW-0694">RNA-binding</keyword>
<keyword id="KW-0808">Transferase</keyword>
<evidence type="ECO:0000255" key="1">
    <source>
        <dbReference type="HAMAP-Rule" id="MF_01595"/>
    </source>
</evidence>
<reference key="1">
    <citation type="submission" date="2006-10" db="EMBL/GenBank/DDBJ databases">
        <authorList>
            <person name="Fleischmann R.D."/>
            <person name="Dodson R.J."/>
            <person name="Haft D.H."/>
            <person name="Merkel J.S."/>
            <person name="Nelson W.C."/>
            <person name="Fraser C.M."/>
        </authorList>
    </citation>
    <scope>NUCLEOTIDE SEQUENCE [LARGE SCALE GENOMIC DNA]</scope>
    <source>
        <strain>104</strain>
    </source>
</reference>